<gene>
    <name evidence="1" type="primary">pepA</name>
    <name type="ordered locus">Bphyt_0984</name>
</gene>
<comment type="function">
    <text evidence="1">Presumably involved in the processing and regular turnover of intracellular proteins. Catalyzes the removal of unsubstituted N-terminal amino acids from various peptides.</text>
</comment>
<comment type="catalytic activity">
    <reaction evidence="1">
        <text>Release of an N-terminal amino acid, Xaa-|-Yaa-, in which Xaa is preferably Leu, but may be other amino acids including Pro although not Arg or Lys, and Yaa may be Pro. Amino acid amides and methyl esters are also readily hydrolyzed, but rates on arylamides are exceedingly low.</text>
        <dbReference type="EC" id="3.4.11.1"/>
    </reaction>
</comment>
<comment type="catalytic activity">
    <reaction evidence="1">
        <text>Release of an N-terminal amino acid, preferentially leucine, but not glutamic or aspartic acids.</text>
        <dbReference type="EC" id="3.4.11.10"/>
    </reaction>
</comment>
<comment type="cofactor">
    <cofactor evidence="1">
        <name>Mn(2+)</name>
        <dbReference type="ChEBI" id="CHEBI:29035"/>
    </cofactor>
    <text evidence="1">Binds 2 manganese ions per subunit.</text>
</comment>
<comment type="subcellular location">
    <subcellularLocation>
        <location evidence="1">Cytoplasm</location>
    </subcellularLocation>
</comment>
<comment type="similarity">
    <text evidence="1">Belongs to the peptidase M17 family.</text>
</comment>
<organism>
    <name type="scientific">Paraburkholderia phytofirmans (strain DSM 17436 / LMG 22146 / PsJN)</name>
    <name type="common">Burkholderia phytofirmans</name>
    <dbReference type="NCBI Taxonomy" id="398527"/>
    <lineage>
        <taxon>Bacteria</taxon>
        <taxon>Pseudomonadati</taxon>
        <taxon>Pseudomonadota</taxon>
        <taxon>Betaproteobacteria</taxon>
        <taxon>Burkholderiales</taxon>
        <taxon>Burkholderiaceae</taxon>
        <taxon>Paraburkholderia</taxon>
    </lineage>
</organism>
<proteinExistence type="inferred from homology"/>
<feature type="chain" id="PRO_1000098311" description="Probable cytosol aminopeptidase">
    <location>
        <begin position="1"/>
        <end position="508"/>
    </location>
</feature>
<feature type="active site" evidence="1">
    <location>
        <position position="286"/>
    </location>
</feature>
<feature type="active site" evidence="1">
    <location>
        <position position="360"/>
    </location>
</feature>
<feature type="binding site" evidence="1">
    <location>
        <position position="274"/>
    </location>
    <ligand>
        <name>Mn(2+)</name>
        <dbReference type="ChEBI" id="CHEBI:29035"/>
        <label>2</label>
    </ligand>
</feature>
<feature type="binding site" evidence="1">
    <location>
        <position position="279"/>
    </location>
    <ligand>
        <name>Mn(2+)</name>
        <dbReference type="ChEBI" id="CHEBI:29035"/>
        <label>1</label>
    </ligand>
</feature>
<feature type="binding site" evidence="1">
    <location>
        <position position="279"/>
    </location>
    <ligand>
        <name>Mn(2+)</name>
        <dbReference type="ChEBI" id="CHEBI:29035"/>
        <label>2</label>
    </ligand>
</feature>
<feature type="binding site" evidence="1">
    <location>
        <position position="297"/>
    </location>
    <ligand>
        <name>Mn(2+)</name>
        <dbReference type="ChEBI" id="CHEBI:29035"/>
        <label>2</label>
    </ligand>
</feature>
<feature type="binding site" evidence="1">
    <location>
        <position position="356"/>
    </location>
    <ligand>
        <name>Mn(2+)</name>
        <dbReference type="ChEBI" id="CHEBI:29035"/>
        <label>1</label>
    </ligand>
</feature>
<feature type="binding site" evidence="1">
    <location>
        <position position="358"/>
    </location>
    <ligand>
        <name>Mn(2+)</name>
        <dbReference type="ChEBI" id="CHEBI:29035"/>
        <label>1</label>
    </ligand>
</feature>
<feature type="binding site" evidence="1">
    <location>
        <position position="358"/>
    </location>
    <ligand>
        <name>Mn(2+)</name>
        <dbReference type="ChEBI" id="CHEBI:29035"/>
        <label>2</label>
    </ligand>
</feature>
<sequence>MDFSIKACDWTKGSSNGFLTGKSDCIVIGVFESQTLSGAALEIDEATRGLLTRIIKAGDMDGKAGTTLFLHEVSGIGASRVLLVGLGKQDAFNQKAYGDAVRAAWRALLGTKIVQVTFTLAQAPILERTADWGVRAAILALRELTYKFTQMKSKPENAARALKRIVFSVNTGDEKAAKLAAKQGAALANGMDLTRDLGNLPSNVCTPTYLANTAKKLAKDWKLKVEVLGEKQCEALKMGSFLSVTAGSVEPAQFIVLQYQGGAAKAAPVVLVGKGVTFDTGGISLKPGEGMDEMKYDMCGAGSVLGTLRAVAEMGLKLNVVGIIPAVENMPSATATKPGDIVTSMKGLTIEVLNTDAEGRLILCDALTYAERFKPAAVIDIATLTGACIIALGHHNSGLFSKDDALAGELLDASREASDPAWRLPLDDEYQDQLKSNFADLANIGGRPAGSVTAACFLSRFTDAYPWAHLDIAGTAWKSGAAKGATGRPVPLLAQFLIDRAADGRATQ</sequence>
<keyword id="KW-0031">Aminopeptidase</keyword>
<keyword id="KW-0963">Cytoplasm</keyword>
<keyword id="KW-0378">Hydrolase</keyword>
<keyword id="KW-0464">Manganese</keyword>
<keyword id="KW-0479">Metal-binding</keyword>
<keyword id="KW-0645">Protease</keyword>
<evidence type="ECO:0000255" key="1">
    <source>
        <dbReference type="HAMAP-Rule" id="MF_00181"/>
    </source>
</evidence>
<reference key="1">
    <citation type="journal article" date="2011" name="J. Bacteriol.">
        <title>Complete genome sequence of the plant growth-promoting endophyte Burkholderia phytofirmans strain PsJN.</title>
        <authorList>
            <person name="Weilharter A."/>
            <person name="Mitter B."/>
            <person name="Shin M.V."/>
            <person name="Chain P.S."/>
            <person name="Nowak J."/>
            <person name="Sessitsch A."/>
        </authorList>
    </citation>
    <scope>NUCLEOTIDE SEQUENCE [LARGE SCALE GENOMIC DNA]</scope>
    <source>
        <strain>DSM 17436 / LMG 22146 / PsJN</strain>
    </source>
</reference>
<dbReference type="EC" id="3.4.11.1" evidence="1"/>
<dbReference type="EC" id="3.4.11.10" evidence="1"/>
<dbReference type="EMBL" id="CP001052">
    <property type="protein sequence ID" value="ACD15403.1"/>
    <property type="molecule type" value="Genomic_DNA"/>
</dbReference>
<dbReference type="RefSeq" id="WP_012432034.1">
    <property type="nucleotide sequence ID" value="NC_010681.1"/>
</dbReference>
<dbReference type="SMR" id="B2T146"/>
<dbReference type="STRING" id="398527.Bphyt_0984"/>
<dbReference type="MEROPS" id="M17.003"/>
<dbReference type="KEGG" id="bpy:Bphyt_0984"/>
<dbReference type="eggNOG" id="COG0260">
    <property type="taxonomic scope" value="Bacteria"/>
</dbReference>
<dbReference type="HOGENOM" id="CLU_013734_2_2_4"/>
<dbReference type="OrthoDB" id="9809354at2"/>
<dbReference type="Proteomes" id="UP000001739">
    <property type="component" value="Chromosome 1"/>
</dbReference>
<dbReference type="GO" id="GO:0005737">
    <property type="term" value="C:cytoplasm"/>
    <property type="evidence" value="ECO:0007669"/>
    <property type="project" value="UniProtKB-SubCell"/>
</dbReference>
<dbReference type="GO" id="GO:0030145">
    <property type="term" value="F:manganese ion binding"/>
    <property type="evidence" value="ECO:0007669"/>
    <property type="project" value="UniProtKB-UniRule"/>
</dbReference>
<dbReference type="GO" id="GO:0070006">
    <property type="term" value="F:metalloaminopeptidase activity"/>
    <property type="evidence" value="ECO:0007669"/>
    <property type="project" value="InterPro"/>
</dbReference>
<dbReference type="GO" id="GO:0006508">
    <property type="term" value="P:proteolysis"/>
    <property type="evidence" value="ECO:0007669"/>
    <property type="project" value="UniProtKB-KW"/>
</dbReference>
<dbReference type="CDD" id="cd00433">
    <property type="entry name" value="Peptidase_M17"/>
    <property type="match status" value="1"/>
</dbReference>
<dbReference type="FunFam" id="3.40.630.10:FF:000004">
    <property type="entry name" value="Probable cytosol aminopeptidase"/>
    <property type="match status" value="1"/>
</dbReference>
<dbReference type="Gene3D" id="3.40.220.10">
    <property type="entry name" value="Leucine Aminopeptidase, subunit E, domain 1"/>
    <property type="match status" value="1"/>
</dbReference>
<dbReference type="Gene3D" id="3.40.630.10">
    <property type="entry name" value="Zn peptidases"/>
    <property type="match status" value="1"/>
</dbReference>
<dbReference type="HAMAP" id="MF_00181">
    <property type="entry name" value="Cytosol_peptidase_M17"/>
    <property type="match status" value="1"/>
</dbReference>
<dbReference type="InterPro" id="IPR011356">
    <property type="entry name" value="Leucine_aapep/pepB"/>
</dbReference>
<dbReference type="InterPro" id="IPR043472">
    <property type="entry name" value="Macro_dom-like"/>
</dbReference>
<dbReference type="InterPro" id="IPR000819">
    <property type="entry name" value="Peptidase_M17_C"/>
</dbReference>
<dbReference type="InterPro" id="IPR023042">
    <property type="entry name" value="Peptidase_M17_leu_NH2_pept"/>
</dbReference>
<dbReference type="InterPro" id="IPR008283">
    <property type="entry name" value="Peptidase_M17_N"/>
</dbReference>
<dbReference type="NCBIfam" id="NF002073">
    <property type="entry name" value="PRK00913.1-2"/>
    <property type="match status" value="1"/>
</dbReference>
<dbReference type="NCBIfam" id="NF002074">
    <property type="entry name" value="PRK00913.1-4"/>
    <property type="match status" value="1"/>
</dbReference>
<dbReference type="NCBIfam" id="NF002077">
    <property type="entry name" value="PRK00913.2-4"/>
    <property type="match status" value="1"/>
</dbReference>
<dbReference type="PANTHER" id="PTHR11963:SF23">
    <property type="entry name" value="CYTOSOL AMINOPEPTIDASE"/>
    <property type="match status" value="1"/>
</dbReference>
<dbReference type="PANTHER" id="PTHR11963">
    <property type="entry name" value="LEUCINE AMINOPEPTIDASE-RELATED"/>
    <property type="match status" value="1"/>
</dbReference>
<dbReference type="Pfam" id="PF00883">
    <property type="entry name" value="Peptidase_M17"/>
    <property type="match status" value="1"/>
</dbReference>
<dbReference type="Pfam" id="PF02789">
    <property type="entry name" value="Peptidase_M17_N"/>
    <property type="match status" value="1"/>
</dbReference>
<dbReference type="PRINTS" id="PR00481">
    <property type="entry name" value="LAMNOPPTDASE"/>
</dbReference>
<dbReference type="SUPFAM" id="SSF52949">
    <property type="entry name" value="Macro domain-like"/>
    <property type="match status" value="1"/>
</dbReference>
<dbReference type="SUPFAM" id="SSF53187">
    <property type="entry name" value="Zn-dependent exopeptidases"/>
    <property type="match status" value="1"/>
</dbReference>
<dbReference type="PROSITE" id="PS00631">
    <property type="entry name" value="CYTOSOL_AP"/>
    <property type="match status" value="1"/>
</dbReference>
<accession>B2T146</accession>
<protein>
    <recommendedName>
        <fullName evidence="1">Probable cytosol aminopeptidase</fullName>
        <ecNumber evidence="1">3.4.11.1</ecNumber>
    </recommendedName>
    <alternativeName>
        <fullName evidence="1">Leucine aminopeptidase</fullName>
        <shortName evidence="1">LAP</shortName>
        <ecNumber evidence="1">3.4.11.10</ecNumber>
    </alternativeName>
    <alternativeName>
        <fullName evidence="1">Leucyl aminopeptidase</fullName>
    </alternativeName>
</protein>
<name>AMPA_PARPJ</name>